<dbReference type="EC" id="4.3.3.6" evidence="1"/>
<dbReference type="EMBL" id="CP000804">
    <property type="protein sequence ID" value="ABU59764.1"/>
    <property type="molecule type" value="Genomic_DNA"/>
</dbReference>
<dbReference type="RefSeq" id="WP_012122187.1">
    <property type="nucleotide sequence ID" value="NC_009767.1"/>
</dbReference>
<dbReference type="SMR" id="A7NQB8"/>
<dbReference type="STRING" id="383372.Rcas_3724"/>
<dbReference type="KEGG" id="rca:Rcas_3724"/>
<dbReference type="eggNOG" id="COG0214">
    <property type="taxonomic scope" value="Bacteria"/>
</dbReference>
<dbReference type="HOGENOM" id="CLU_055352_1_0_0"/>
<dbReference type="OrthoDB" id="9772545at2"/>
<dbReference type="UniPathway" id="UPA00245"/>
<dbReference type="Proteomes" id="UP000000263">
    <property type="component" value="Chromosome"/>
</dbReference>
<dbReference type="GO" id="GO:0036381">
    <property type="term" value="F:pyridoxal 5'-phosphate synthase (glutamine hydrolysing) activity"/>
    <property type="evidence" value="ECO:0007669"/>
    <property type="project" value="UniProtKB-UniRule"/>
</dbReference>
<dbReference type="GO" id="GO:0006520">
    <property type="term" value="P:amino acid metabolic process"/>
    <property type="evidence" value="ECO:0007669"/>
    <property type="project" value="TreeGrafter"/>
</dbReference>
<dbReference type="GO" id="GO:0042823">
    <property type="term" value="P:pyridoxal phosphate biosynthetic process"/>
    <property type="evidence" value="ECO:0007669"/>
    <property type="project" value="UniProtKB-UniRule"/>
</dbReference>
<dbReference type="GO" id="GO:0008615">
    <property type="term" value="P:pyridoxine biosynthetic process"/>
    <property type="evidence" value="ECO:0007669"/>
    <property type="project" value="TreeGrafter"/>
</dbReference>
<dbReference type="CDD" id="cd04727">
    <property type="entry name" value="pdxS"/>
    <property type="match status" value="1"/>
</dbReference>
<dbReference type="FunFam" id="3.20.20.70:FF:000001">
    <property type="entry name" value="Pyridoxine biosynthesis protein PDX1"/>
    <property type="match status" value="1"/>
</dbReference>
<dbReference type="Gene3D" id="3.20.20.70">
    <property type="entry name" value="Aldolase class I"/>
    <property type="match status" value="1"/>
</dbReference>
<dbReference type="HAMAP" id="MF_01824">
    <property type="entry name" value="PdxS"/>
    <property type="match status" value="1"/>
</dbReference>
<dbReference type="InterPro" id="IPR013785">
    <property type="entry name" value="Aldolase_TIM"/>
</dbReference>
<dbReference type="InterPro" id="IPR001852">
    <property type="entry name" value="PdxS/SNZ"/>
</dbReference>
<dbReference type="InterPro" id="IPR033755">
    <property type="entry name" value="PdxS/SNZ_N"/>
</dbReference>
<dbReference type="InterPro" id="IPR011060">
    <property type="entry name" value="RibuloseP-bd_barrel"/>
</dbReference>
<dbReference type="NCBIfam" id="NF003215">
    <property type="entry name" value="PRK04180.1"/>
    <property type="match status" value="1"/>
</dbReference>
<dbReference type="NCBIfam" id="TIGR00343">
    <property type="entry name" value="pyridoxal 5'-phosphate synthase lyase subunit PdxS"/>
    <property type="match status" value="1"/>
</dbReference>
<dbReference type="PANTHER" id="PTHR31829">
    <property type="entry name" value="PYRIDOXAL 5'-PHOSPHATE SYNTHASE SUBUNIT SNZ1-RELATED"/>
    <property type="match status" value="1"/>
</dbReference>
<dbReference type="PANTHER" id="PTHR31829:SF0">
    <property type="entry name" value="PYRIDOXAL 5'-PHOSPHATE SYNTHASE SUBUNIT SNZ1-RELATED"/>
    <property type="match status" value="1"/>
</dbReference>
<dbReference type="Pfam" id="PF01680">
    <property type="entry name" value="SOR_SNZ"/>
    <property type="match status" value="1"/>
</dbReference>
<dbReference type="PIRSF" id="PIRSF029271">
    <property type="entry name" value="Pdx1"/>
    <property type="match status" value="1"/>
</dbReference>
<dbReference type="SUPFAM" id="SSF51366">
    <property type="entry name" value="Ribulose-phoshate binding barrel"/>
    <property type="match status" value="1"/>
</dbReference>
<dbReference type="PROSITE" id="PS01235">
    <property type="entry name" value="PDXS_SNZ_1"/>
    <property type="match status" value="1"/>
</dbReference>
<dbReference type="PROSITE" id="PS51129">
    <property type="entry name" value="PDXS_SNZ_2"/>
    <property type="match status" value="1"/>
</dbReference>
<feature type="chain" id="PRO_1000088408" description="Pyridoxal 5'-phosphate synthase subunit PdxS">
    <location>
        <begin position="1"/>
        <end position="293"/>
    </location>
</feature>
<feature type="active site" description="Schiff-base intermediate with D-ribose 5-phosphate" evidence="1">
    <location>
        <position position="80"/>
    </location>
</feature>
<feature type="binding site" evidence="1">
    <location>
        <position position="23"/>
    </location>
    <ligand>
        <name>D-ribose 5-phosphate</name>
        <dbReference type="ChEBI" id="CHEBI:78346"/>
    </ligand>
</feature>
<feature type="binding site" evidence="1">
    <location>
        <position position="152"/>
    </location>
    <ligand>
        <name>D-ribose 5-phosphate</name>
        <dbReference type="ChEBI" id="CHEBI:78346"/>
    </ligand>
</feature>
<feature type="binding site" evidence="1">
    <location>
        <position position="164"/>
    </location>
    <ligand>
        <name>D-glyceraldehyde 3-phosphate</name>
        <dbReference type="ChEBI" id="CHEBI:59776"/>
    </ligand>
</feature>
<feature type="binding site" evidence="1">
    <location>
        <position position="213"/>
    </location>
    <ligand>
        <name>D-ribose 5-phosphate</name>
        <dbReference type="ChEBI" id="CHEBI:78346"/>
    </ligand>
</feature>
<feature type="binding site" evidence="1">
    <location>
        <begin position="234"/>
        <end position="235"/>
    </location>
    <ligand>
        <name>D-ribose 5-phosphate</name>
        <dbReference type="ChEBI" id="CHEBI:78346"/>
    </ligand>
</feature>
<accession>A7NQB8</accession>
<proteinExistence type="inferred from homology"/>
<name>PDXS_ROSCS</name>
<sequence length="293" mass="31505">MDKSTWTTKVGLAQMLKGGVIMDVVTPEQARIAEEAGAVAVMALERVPADIRAQGGVARMSDPELILAIKEAVTIPVMAKARIGHFVEAQVLEALGIDYIDESEVLTPADEEHHINKHKFRIPFVCGCRNLGEGLRRVAEGAAMLRTKGEAGTGNVVEAVRHARAVYSEIRRLQTMDEDELFTYAKNIQAPYELVRQVAESGRLPVVNFAAGGIATPADAALLMQLGVDGVFVGSGIFKSGDPARRARAIVAATTHYNEPEIIAEVSRGLGEAMVGIEIGKIPRDQLMAGRGW</sequence>
<evidence type="ECO:0000255" key="1">
    <source>
        <dbReference type="HAMAP-Rule" id="MF_01824"/>
    </source>
</evidence>
<gene>
    <name evidence="1" type="primary">pdxS</name>
    <name type="ordered locus">Rcas_3724</name>
</gene>
<protein>
    <recommendedName>
        <fullName evidence="1">Pyridoxal 5'-phosphate synthase subunit PdxS</fullName>
        <shortName evidence="1">PLP synthase subunit PdxS</shortName>
        <ecNumber evidence="1">4.3.3.6</ecNumber>
    </recommendedName>
    <alternativeName>
        <fullName evidence="1">Pdx1</fullName>
    </alternativeName>
</protein>
<comment type="function">
    <text evidence="1">Catalyzes the formation of pyridoxal 5'-phosphate from ribose 5-phosphate (RBP), glyceraldehyde 3-phosphate (G3P) and ammonia. The ammonia is provided by the PdxT subunit. Can also use ribulose 5-phosphate and dihydroxyacetone phosphate as substrates, resulting from enzyme-catalyzed isomerization of RBP and G3P, respectively.</text>
</comment>
<comment type="catalytic activity">
    <reaction evidence="1">
        <text>aldehydo-D-ribose 5-phosphate + D-glyceraldehyde 3-phosphate + L-glutamine = pyridoxal 5'-phosphate + L-glutamate + phosphate + 3 H2O + H(+)</text>
        <dbReference type="Rhea" id="RHEA:31507"/>
        <dbReference type="ChEBI" id="CHEBI:15377"/>
        <dbReference type="ChEBI" id="CHEBI:15378"/>
        <dbReference type="ChEBI" id="CHEBI:29985"/>
        <dbReference type="ChEBI" id="CHEBI:43474"/>
        <dbReference type="ChEBI" id="CHEBI:58273"/>
        <dbReference type="ChEBI" id="CHEBI:58359"/>
        <dbReference type="ChEBI" id="CHEBI:59776"/>
        <dbReference type="ChEBI" id="CHEBI:597326"/>
        <dbReference type="EC" id="4.3.3.6"/>
    </reaction>
</comment>
<comment type="pathway">
    <text evidence="1">Cofactor biosynthesis; pyridoxal 5'-phosphate biosynthesis.</text>
</comment>
<comment type="subunit">
    <text evidence="1">In the presence of PdxT, forms a dodecamer of heterodimers.</text>
</comment>
<comment type="similarity">
    <text evidence="1">Belongs to the PdxS/SNZ family.</text>
</comment>
<organism>
    <name type="scientific">Roseiflexus castenholzii (strain DSM 13941 / HLO8)</name>
    <dbReference type="NCBI Taxonomy" id="383372"/>
    <lineage>
        <taxon>Bacteria</taxon>
        <taxon>Bacillati</taxon>
        <taxon>Chloroflexota</taxon>
        <taxon>Chloroflexia</taxon>
        <taxon>Chloroflexales</taxon>
        <taxon>Roseiflexineae</taxon>
        <taxon>Roseiflexaceae</taxon>
        <taxon>Roseiflexus</taxon>
    </lineage>
</organism>
<keyword id="KW-0456">Lyase</keyword>
<keyword id="KW-0663">Pyridoxal phosphate</keyword>
<keyword id="KW-1185">Reference proteome</keyword>
<keyword id="KW-0704">Schiff base</keyword>
<reference key="1">
    <citation type="submission" date="2007-08" db="EMBL/GenBank/DDBJ databases">
        <title>Complete sequence of Roseiflexus castenholzii DSM 13941.</title>
        <authorList>
            <consortium name="US DOE Joint Genome Institute"/>
            <person name="Copeland A."/>
            <person name="Lucas S."/>
            <person name="Lapidus A."/>
            <person name="Barry K."/>
            <person name="Glavina del Rio T."/>
            <person name="Dalin E."/>
            <person name="Tice H."/>
            <person name="Pitluck S."/>
            <person name="Thompson L.S."/>
            <person name="Brettin T."/>
            <person name="Bruce D."/>
            <person name="Detter J.C."/>
            <person name="Han C."/>
            <person name="Tapia R."/>
            <person name="Schmutz J."/>
            <person name="Larimer F."/>
            <person name="Land M."/>
            <person name="Hauser L."/>
            <person name="Kyrpides N."/>
            <person name="Mikhailova N."/>
            <person name="Bryant D.A."/>
            <person name="Hanada S."/>
            <person name="Tsukatani Y."/>
            <person name="Richardson P."/>
        </authorList>
    </citation>
    <scope>NUCLEOTIDE SEQUENCE [LARGE SCALE GENOMIC DNA]</scope>
    <source>
        <strain>DSM 13941 / HLO8</strain>
    </source>
</reference>